<name>DPYS_HUMAN</name>
<gene>
    <name type="primary">DPYS</name>
</gene>
<reference key="1">
    <citation type="journal article" date="1996" name="Gene">
        <title>A novel gene family defined by human dihydropyrimidinase and three related proteins with differential tissue distribution.</title>
        <authorList>
            <person name="Hamajima N."/>
            <person name="Matsuda K."/>
            <person name="Sakata S."/>
            <person name="Tamaki N."/>
            <person name="Sasaki M."/>
            <person name="Nonaka M."/>
        </authorList>
    </citation>
    <scope>NUCLEOTIDE SEQUENCE [MRNA]</scope>
    <source>
        <tissue>Liver</tissue>
    </source>
</reference>
<reference key="2">
    <citation type="journal article" date="1998" name="Am. J. Hum. Genet.">
        <title>Dihydropyrimidinase deficiency: structural organization, chromosomal localization, and mutation analysis of the human dihydropyrimidinase gene.</title>
        <authorList>
            <person name="Hamajima N."/>
            <person name="Kouwaki M."/>
            <person name="Vreken P."/>
            <person name="Matsuda K."/>
            <person name="Sumi S."/>
            <person name="Imaeda M."/>
            <person name="Ohba S."/>
            <person name="Kidouchi K."/>
            <person name="Nonaka M."/>
            <person name="Sasaki M."/>
            <person name="Tamaki N."/>
            <person name="Endo Y."/>
            <person name="de Abreu R."/>
            <person name="Rottevell J."/>
            <person name="van Kuilenburg A."/>
            <person name="van Gennip A."/>
            <person name="Togari H."/>
            <person name="Wada Y."/>
        </authorList>
    </citation>
    <scope>NUCLEOTIDE SEQUENCE [GENOMIC DNA]</scope>
    <scope>VARIANTS DPYSD ARG-68; ARG-334; ARG-360; ARG-435 AND THR-490</scope>
</reference>
<reference key="3">
    <citation type="journal article" date="2004" name="Genome Res.">
        <title>The status, quality, and expansion of the NIH full-length cDNA project: the Mammalian Gene Collection (MGC).</title>
        <authorList>
            <consortium name="The MGC Project Team"/>
        </authorList>
    </citation>
    <scope>NUCLEOTIDE SEQUENCE [LARGE SCALE MRNA]</scope>
    <source>
        <tissue>Colon</tissue>
        <tissue>Kidney</tissue>
        <tissue>Stomach</tissue>
    </source>
</reference>
<reference key="4">
    <citation type="journal article" date="2014" name="J. Proteomics">
        <title>An enzyme assisted RP-RPLC approach for in-depth analysis of human liver phosphoproteome.</title>
        <authorList>
            <person name="Bian Y."/>
            <person name="Song C."/>
            <person name="Cheng K."/>
            <person name="Dong M."/>
            <person name="Wang F."/>
            <person name="Huang J."/>
            <person name="Sun D."/>
            <person name="Wang L."/>
            <person name="Ye M."/>
            <person name="Zou H."/>
        </authorList>
    </citation>
    <scope>PHOSPHORYLATION [LARGE SCALE ANALYSIS] AT SER-79</scope>
    <scope>IDENTIFICATION BY MASS SPECTROMETRY [LARGE SCALE ANALYSIS]</scope>
    <source>
        <tissue>Liver</tissue>
    </source>
</reference>
<reference key="5">
    <citation type="submission" date="2009-02" db="PDB data bank">
        <title>The crystal structure of human dihydropyrimidinase.</title>
        <authorList>
            <consortium name="Structural genomics consortium (SGC)"/>
        </authorList>
    </citation>
    <scope>X-RAY CRYSTALLOGRAPHY (2.80 ANGSTROMS) IN COMPLEX WITH ZINC IONS</scope>
    <scope>COFACTOR</scope>
</reference>
<proteinExistence type="evidence at protein level"/>
<protein>
    <recommendedName>
        <fullName>Dihydropyrimidinase</fullName>
        <shortName>DHP</shortName>
        <shortName>DHPase</shortName>
        <ecNumber evidence="2">3.5.2.2</ecNumber>
    </recommendedName>
    <alternativeName>
        <fullName>Dihydropyrimidine amidohydrolase</fullName>
    </alternativeName>
    <alternativeName>
        <fullName>Hydantoinase</fullName>
    </alternativeName>
</protein>
<organism>
    <name type="scientific">Homo sapiens</name>
    <name type="common">Human</name>
    <dbReference type="NCBI Taxonomy" id="9606"/>
    <lineage>
        <taxon>Eukaryota</taxon>
        <taxon>Metazoa</taxon>
        <taxon>Chordata</taxon>
        <taxon>Craniata</taxon>
        <taxon>Vertebrata</taxon>
        <taxon>Euteleostomi</taxon>
        <taxon>Mammalia</taxon>
        <taxon>Eutheria</taxon>
        <taxon>Euarchontoglires</taxon>
        <taxon>Primates</taxon>
        <taxon>Haplorrhini</taxon>
        <taxon>Catarrhini</taxon>
        <taxon>Hominidae</taxon>
        <taxon>Homo</taxon>
    </lineage>
</organism>
<dbReference type="EC" id="3.5.2.2" evidence="2"/>
<dbReference type="EMBL" id="D78011">
    <property type="protein sequence ID" value="BAA11189.1"/>
    <property type="molecule type" value="mRNA"/>
</dbReference>
<dbReference type="EMBL" id="AB004678">
    <property type="protein sequence ID" value="BAA33067.1"/>
    <property type="molecule type" value="Genomic_DNA"/>
</dbReference>
<dbReference type="EMBL" id="BC034395">
    <property type="protein sequence ID" value="AAH34395.1"/>
    <property type="molecule type" value="mRNA"/>
</dbReference>
<dbReference type="CCDS" id="CCDS6302.1"/>
<dbReference type="PIR" id="JC5315">
    <property type="entry name" value="JC5315"/>
</dbReference>
<dbReference type="RefSeq" id="NP_001376.1">
    <property type="nucleotide sequence ID" value="NM_001385.3"/>
</dbReference>
<dbReference type="PDB" id="2VR2">
    <property type="method" value="X-ray"/>
    <property type="resolution" value="2.80 A"/>
    <property type="chains" value="A=1-519"/>
</dbReference>
<dbReference type="PDBsum" id="2VR2"/>
<dbReference type="SMR" id="Q14117"/>
<dbReference type="BioGRID" id="108141">
    <property type="interactions" value="9"/>
</dbReference>
<dbReference type="FunCoup" id="Q14117">
    <property type="interactions" value="545"/>
</dbReference>
<dbReference type="IntAct" id="Q14117">
    <property type="interactions" value="15"/>
</dbReference>
<dbReference type="STRING" id="9606.ENSP00000276651"/>
<dbReference type="ChEMBL" id="CHEMBL2465"/>
<dbReference type="MEROPS" id="M38.973"/>
<dbReference type="GlyGen" id="Q14117">
    <property type="glycosylation" value="1 site"/>
</dbReference>
<dbReference type="iPTMnet" id="Q14117"/>
<dbReference type="PhosphoSitePlus" id="Q14117"/>
<dbReference type="BioMuta" id="DPYS"/>
<dbReference type="DMDM" id="3122049"/>
<dbReference type="jPOST" id="Q14117"/>
<dbReference type="MassIVE" id="Q14117"/>
<dbReference type="PaxDb" id="9606-ENSP00000276651"/>
<dbReference type="PeptideAtlas" id="Q14117"/>
<dbReference type="ProteomicsDB" id="59824"/>
<dbReference type="Antibodypedia" id="13364">
    <property type="antibodies" value="305 antibodies from 27 providers"/>
</dbReference>
<dbReference type="DNASU" id="1807"/>
<dbReference type="Ensembl" id="ENST00000351513.7">
    <property type="protein sequence ID" value="ENSP00000276651.2"/>
    <property type="gene ID" value="ENSG00000147647.13"/>
</dbReference>
<dbReference type="GeneID" id="1807"/>
<dbReference type="KEGG" id="hsa:1807"/>
<dbReference type="MANE-Select" id="ENST00000351513.7">
    <property type="protein sequence ID" value="ENSP00000276651.2"/>
    <property type="RefSeq nucleotide sequence ID" value="NM_001385.3"/>
    <property type="RefSeq protein sequence ID" value="NP_001376.1"/>
</dbReference>
<dbReference type="UCSC" id="uc003yly.5">
    <property type="organism name" value="human"/>
</dbReference>
<dbReference type="AGR" id="HGNC:3013"/>
<dbReference type="CTD" id="1807"/>
<dbReference type="DisGeNET" id="1807"/>
<dbReference type="GeneCards" id="DPYS"/>
<dbReference type="HGNC" id="HGNC:3013">
    <property type="gene designation" value="DPYS"/>
</dbReference>
<dbReference type="HPA" id="ENSG00000147647">
    <property type="expression patterns" value="Group enriched (kidney, liver)"/>
</dbReference>
<dbReference type="MalaCards" id="DPYS"/>
<dbReference type="MIM" id="222748">
    <property type="type" value="phenotype"/>
</dbReference>
<dbReference type="MIM" id="613326">
    <property type="type" value="gene"/>
</dbReference>
<dbReference type="neXtProt" id="NX_Q14117"/>
<dbReference type="OpenTargets" id="ENSG00000147647"/>
<dbReference type="Orphanet" id="38874">
    <property type="disease" value="Dihydropyrimidinuria"/>
</dbReference>
<dbReference type="PharmGKB" id="PA146"/>
<dbReference type="VEuPathDB" id="HostDB:ENSG00000147647"/>
<dbReference type="eggNOG" id="KOG2584">
    <property type="taxonomic scope" value="Eukaryota"/>
</dbReference>
<dbReference type="GeneTree" id="ENSGT01030000234527"/>
<dbReference type="HOGENOM" id="CLU_015572_2_2_1"/>
<dbReference type="InParanoid" id="Q14117"/>
<dbReference type="OMA" id="SAETHHM"/>
<dbReference type="OrthoDB" id="10258955at2759"/>
<dbReference type="PAN-GO" id="Q14117">
    <property type="GO annotations" value="2 GO annotations based on evolutionary models"/>
</dbReference>
<dbReference type="PhylomeDB" id="Q14117"/>
<dbReference type="TreeFam" id="TF314706"/>
<dbReference type="BioCyc" id="MetaCyc:HS07460-MONOMER"/>
<dbReference type="PathwayCommons" id="Q14117"/>
<dbReference type="Reactome" id="R-HSA-73621">
    <property type="pathway name" value="Pyrimidine catabolism"/>
</dbReference>
<dbReference type="SignaLink" id="Q14117"/>
<dbReference type="BioGRID-ORCS" id="1807">
    <property type="hits" value="7 hits in 1144 CRISPR screens"/>
</dbReference>
<dbReference type="EvolutionaryTrace" id="Q14117"/>
<dbReference type="GeneWiki" id="DPYS"/>
<dbReference type="GenomeRNAi" id="1807"/>
<dbReference type="Pharos" id="Q14117">
    <property type="development level" value="Tbio"/>
</dbReference>
<dbReference type="PRO" id="PR:Q14117"/>
<dbReference type="Proteomes" id="UP000005640">
    <property type="component" value="Chromosome 8"/>
</dbReference>
<dbReference type="RNAct" id="Q14117">
    <property type="molecule type" value="protein"/>
</dbReference>
<dbReference type="Bgee" id="ENSG00000147647">
    <property type="expression patterns" value="Expressed in right lobe of liver and 118 other cell types or tissues"/>
</dbReference>
<dbReference type="ExpressionAtlas" id="Q14117">
    <property type="expression patterns" value="baseline and differential"/>
</dbReference>
<dbReference type="GO" id="GO:0005829">
    <property type="term" value="C:cytosol"/>
    <property type="evidence" value="ECO:0000250"/>
    <property type="project" value="UniProtKB"/>
</dbReference>
<dbReference type="GO" id="GO:0070062">
    <property type="term" value="C:extracellular exosome"/>
    <property type="evidence" value="ECO:0007005"/>
    <property type="project" value="UniProtKB"/>
</dbReference>
<dbReference type="GO" id="GO:0004157">
    <property type="term" value="F:dihydropyrimidinase activity"/>
    <property type="evidence" value="ECO:0000314"/>
    <property type="project" value="UniProtKB"/>
</dbReference>
<dbReference type="GO" id="GO:0042802">
    <property type="term" value="F:identical protein binding"/>
    <property type="evidence" value="ECO:0000250"/>
    <property type="project" value="UniProtKB"/>
</dbReference>
<dbReference type="GO" id="GO:0051219">
    <property type="term" value="F:phosphoprotein binding"/>
    <property type="evidence" value="ECO:0007669"/>
    <property type="project" value="Ensembl"/>
</dbReference>
<dbReference type="GO" id="GO:0008270">
    <property type="term" value="F:zinc ion binding"/>
    <property type="evidence" value="ECO:0000303"/>
    <property type="project" value="UniProtKB"/>
</dbReference>
<dbReference type="GO" id="GO:0006248">
    <property type="term" value="P:CMP catabolic process"/>
    <property type="evidence" value="ECO:0007669"/>
    <property type="project" value="Ensembl"/>
</dbReference>
<dbReference type="GO" id="GO:0006249">
    <property type="term" value="P:dCMP catabolic process"/>
    <property type="evidence" value="ECO:0007669"/>
    <property type="project" value="Ensembl"/>
</dbReference>
<dbReference type="GO" id="GO:0046079">
    <property type="term" value="P:dUMP catabolic process"/>
    <property type="evidence" value="ECO:0007669"/>
    <property type="project" value="Ensembl"/>
</dbReference>
<dbReference type="GO" id="GO:0006208">
    <property type="term" value="P:pyrimidine nucleobase catabolic process"/>
    <property type="evidence" value="ECO:0000314"/>
    <property type="project" value="UniProtKB"/>
</dbReference>
<dbReference type="GO" id="GO:0006210">
    <property type="term" value="P:thymine catabolic process"/>
    <property type="evidence" value="ECO:0000250"/>
    <property type="project" value="UniProtKB"/>
</dbReference>
<dbReference type="GO" id="GO:0046050">
    <property type="term" value="P:UMP catabolic process"/>
    <property type="evidence" value="ECO:0007669"/>
    <property type="project" value="Ensembl"/>
</dbReference>
<dbReference type="GO" id="GO:0006212">
    <property type="term" value="P:uracil catabolic process"/>
    <property type="evidence" value="ECO:0000314"/>
    <property type="project" value="UniProtKB"/>
</dbReference>
<dbReference type="CDD" id="cd01314">
    <property type="entry name" value="D-HYD"/>
    <property type="match status" value="1"/>
</dbReference>
<dbReference type="FunFam" id="3.20.20.140:FF:000076">
    <property type="entry name" value="Dihydropyrimidinase like 2"/>
    <property type="match status" value="1"/>
</dbReference>
<dbReference type="Gene3D" id="3.20.20.140">
    <property type="entry name" value="Metal-dependent hydrolases"/>
    <property type="match status" value="1"/>
</dbReference>
<dbReference type="Gene3D" id="2.30.40.10">
    <property type="entry name" value="Urease, subunit C, domain 1"/>
    <property type="match status" value="1"/>
</dbReference>
<dbReference type="InterPro" id="IPR006680">
    <property type="entry name" value="Amidohydro-rel"/>
</dbReference>
<dbReference type="InterPro" id="IPR011778">
    <property type="entry name" value="Hydantoinase/dihydroPyrase"/>
</dbReference>
<dbReference type="InterPro" id="IPR011059">
    <property type="entry name" value="Metal-dep_hydrolase_composite"/>
</dbReference>
<dbReference type="InterPro" id="IPR032466">
    <property type="entry name" value="Metal_Hydrolase"/>
</dbReference>
<dbReference type="InterPro" id="IPR050378">
    <property type="entry name" value="Metallo-dep_Hydrolases_sf"/>
</dbReference>
<dbReference type="NCBIfam" id="TIGR02033">
    <property type="entry name" value="D-hydantoinase"/>
    <property type="match status" value="1"/>
</dbReference>
<dbReference type="PANTHER" id="PTHR11647:SF50">
    <property type="entry name" value="DIHYDROPYRIMIDINASE"/>
    <property type="match status" value="1"/>
</dbReference>
<dbReference type="PANTHER" id="PTHR11647">
    <property type="entry name" value="HYDRANTOINASE/DIHYDROPYRIMIDINASE FAMILY MEMBER"/>
    <property type="match status" value="1"/>
</dbReference>
<dbReference type="Pfam" id="PF01979">
    <property type="entry name" value="Amidohydro_1"/>
    <property type="match status" value="1"/>
</dbReference>
<dbReference type="SUPFAM" id="SSF51338">
    <property type="entry name" value="Composite domain of metallo-dependent hydrolases"/>
    <property type="match status" value="2"/>
</dbReference>
<dbReference type="SUPFAM" id="SSF51556">
    <property type="entry name" value="Metallo-dependent hydrolases"/>
    <property type="match status" value="1"/>
</dbReference>
<accession>Q14117</accession>
<keyword id="KW-0002">3D-structure</keyword>
<keyword id="KW-0225">Disease variant</keyword>
<keyword id="KW-0378">Hydrolase</keyword>
<keyword id="KW-0479">Metal-binding</keyword>
<keyword id="KW-0597">Phosphoprotein</keyword>
<keyword id="KW-1267">Proteomics identification</keyword>
<keyword id="KW-1185">Reference proteome</keyword>
<keyword id="KW-0862">Zinc</keyword>
<sequence length="519" mass="56630">MAAPSRLLIRGGRVVNDDFSEVADVLVEDGVVRALGHDLLPPGGAPAGLRVLDAAGKLVLPGGIDTHTHMQFPFMGSRSIDDFHQGTKAALSGGTTMIIDFAIPQKGGSLIEAFETWRSWADPKVCCDYSLHVAVTWWSDQVKEEMKILVQDKGVNSFKMFMAYKDLYMVTDLELYEAFSRCKEIGAIAQVHAENGDLIAEGAKKMLALGITGPEGHELCRPEAVEAEATLRAITIASAVNCPLYIVHVMSKSAAKVIADARRDGKVVYGEPIAASLGTDGTHYWNKEWHHAAHHVMGPPLRPDPSTPDFLMNLLANDDLTTTGTDNCTFNTCQKALGKDDFTKIPNGVNGVEDRMSVIWEKGVHSGKMDENRFVAVTSTNAAKIFNLYPRKGRIAVGSDADIVIWDPKGTRTISAKTHHQAVNFNIFEGMVCHGVPLVTISRGKVVYEAGVFSVTAGDGKFIPRKPFAEYIYKRIKQRDRTCTPTPVERAPYKGEVATLKSRVTKEDATAGTRKQAHP</sequence>
<comment type="function">
    <text>Catalyzes the second step of the reductive pyrimidine degradation, the reversible hydrolytic ring opening of dihydropyrimidines. Can catalyze the ring opening of 5,6-dihydrouracil to N-carbamyl-alanine and of 5,6-dihydrothymine to N-carbamyl-amino isobutyrate.</text>
</comment>
<comment type="catalytic activity">
    <reaction evidence="2">
        <text>5,6-dihydrouracil + H2O = 3-(carbamoylamino)propanoate + H(+)</text>
        <dbReference type="Rhea" id="RHEA:16121"/>
        <dbReference type="ChEBI" id="CHEBI:11892"/>
        <dbReference type="ChEBI" id="CHEBI:15377"/>
        <dbReference type="ChEBI" id="CHEBI:15378"/>
        <dbReference type="ChEBI" id="CHEBI:15901"/>
        <dbReference type="EC" id="3.5.2.2"/>
    </reaction>
</comment>
<comment type="cofactor">
    <cofactor evidence="7">
        <name>Zn(2+)</name>
        <dbReference type="ChEBI" id="CHEBI:29105"/>
    </cofactor>
    <text evidence="7">Binds 2 Zn(2+) ions per subunit.</text>
</comment>
<comment type="subunit">
    <text evidence="9">Homotetramer.</text>
</comment>
<comment type="interaction">
    <interactant intactId="EBI-12275416">
        <id>Q14117</id>
    </interactant>
    <interactant intactId="EBI-743771">
        <id>Q92624</id>
        <label>APPBP2</label>
    </interactant>
    <organismsDiffer>false</organismsDiffer>
    <experiments>3</experiments>
</comment>
<comment type="interaction">
    <interactant intactId="EBI-12275416">
        <id>Q14117</id>
    </interactant>
    <interactant intactId="EBI-10988864">
        <id>P46379-2</id>
        <label>BAG6</label>
    </interactant>
    <organismsDiffer>false</organismsDiffer>
    <experiments>3</experiments>
</comment>
<comment type="interaction">
    <interactant intactId="EBI-12275416">
        <id>Q14117</id>
    </interactant>
    <interactant intactId="EBI-25837549">
        <id>P28329-3</id>
        <label>CHAT</label>
    </interactant>
    <organismsDiffer>false</organismsDiffer>
    <experiments>3</experiments>
</comment>
<comment type="interaction">
    <interactant intactId="EBI-12275416">
        <id>Q14117</id>
    </interactant>
    <interactant intactId="EBI-395638">
        <id>O14645</id>
        <label>DNALI1</label>
    </interactant>
    <organismsDiffer>false</organismsDiffer>
    <experiments>3</experiments>
</comment>
<comment type="interaction">
    <interactant intactId="EBI-12275416">
        <id>Q14117</id>
    </interactant>
    <interactant intactId="EBI-348399">
        <id>P22607</id>
        <label>FGFR3</label>
    </interactant>
    <organismsDiffer>false</organismsDiffer>
    <experiments>3</experiments>
</comment>
<comment type="interaction">
    <interactant intactId="EBI-12275416">
        <id>Q14117</id>
    </interactant>
    <interactant intactId="EBI-8285963">
        <id>Q14957</id>
        <label>GRIN2C</label>
    </interactant>
    <organismsDiffer>false</organismsDiffer>
    <experiments>3</experiments>
</comment>
<comment type="interaction">
    <interactant intactId="EBI-12275416">
        <id>Q14117</id>
    </interactant>
    <interactant intactId="EBI-351506">
        <id>P06396</id>
        <label>GSN</label>
    </interactant>
    <organismsDiffer>false</organismsDiffer>
    <experiments>3</experiments>
</comment>
<comment type="interaction">
    <interactant intactId="EBI-12275416">
        <id>Q14117</id>
    </interactant>
    <interactant intactId="EBI-350145">
        <id>P01112</id>
        <label>HRAS</label>
    </interactant>
    <organismsDiffer>false</organismsDiffer>
    <experiments>3</experiments>
</comment>
<comment type="interaction">
    <interactant intactId="EBI-12275416">
        <id>Q14117</id>
    </interactant>
    <interactant intactId="EBI-948266">
        <id>O14901</id>
        <label>KLF11</label>
    </interactant>
    <organismsDiffer>false</organismsDiffer>
    <experiments>3</experiments>
</comment>
<comment type="interaction">
    <interactant intactId="EBI-12275416">
        <id>Q14117</id>
    </interactant>
    <interactant intactId="EBI-2811583">
        <id>Q9BVL2</id>
        <label>NUP58</label>
    </interactant>
    <organismsDiffer>false</organismsDiffer>
    <experiments>3</experiments>
</comment>
<comment type="interaction">
    <interactant intactId="EBI-12275416">
        <id>Q14117</id>
    </interactant>
    <interactant intactId="EBI-741480">
        <id>Q9UMX0</id>
        <label>UBQLN1</label>
    </interactant>
    <organismsDiffer>false</organismsDiffer>
    <experiments>3</experiments>
</comment>
<comment type="tissue specificity">
    <text>Liver and kidney.</text>
</comment>
<comment type="PTM">
    <text evidence="1">Carboxylation allows a single lysine to coordinate two zinc ions.</text>
</comment>
<comment type="disease" evidence="6">
    <disease id="DI-01483">
        <name>Dihydropyrimidinase deficiency</name>
        <acronym>DPYSD</acronym>
        <description>An autosomal recessive disorder of pyrimidine metabolism characterized by dihydropyrimidinuria. It is associated with a variable clinical phenotype characterized by epileptic or convulsive attacks, dysmorphic features and severe developmental delay, and congenital microvillous atrophy. Most patients are, however, asymptomatic.</description>
        <dbReference type="MIM" id="222748"/>
    </disease>
    <text>The disease is caused by variants affecting the gene represented in this entry.</text>
</comment>
<comment type="similarity">
    <text evidence="8">Belongs to the metallo-dependent hydrolases superfamily. Hydantoinase/dihydropyrimidinase family.</text>
</comment>
<feature type="chain" id="PRO_0000165906" description="Dihydropyrimidinase">
    <location>
        <begin position="1"/>
        <end position="519"/>
    </location>
</feature>
<feature type="binding site" evidence="7 10">
    <location>
        <position position="67"/>
    </location>
    <ligand>
        <name>Zn(2+)</name>
        <dbReference type="ChEBI" id="CHEBI:29105"/>
        <label>1</label>
    </ligand>
</feature>
<feature type="binding site" evidence="7 10">
    <location>
        <position position="69"/>
    </location>
    <ligand>
        <name>Zn(2+)</name>
        <dbReference type="ChEBI" id="CHEBI:29105"/>
        <label>1</label>
    </ligand>
</feature>
<feature type="binding site" description="via carbamate group" evidence="7 10">
    <location>
        <position position="159"/>
    </location>
    <ligand>
        <name>Zn(2+)</name>
        <dbReference type="ChEBI" id="CHEBI:29105"/>
        <label>1</label>
    </ligand>
</feature>
<feature type="binding site" description="via carbamate group" evidence="7 10">
    <location>
        <position position="159"/>
    </location>
    <ligand>
        <name>Zn(2+)</name>
        <dbReference type="ChEBI" id="CHEBI:29105"/>
        <label>2</label>
    </ligand>
</feature>
<feature type="binding site" evidence="5">
    <location>
        <position position="164"/>
    </location>
    <ligand>
        <name>substrate</name>
    </ligand>
</feature>
<feature type="binding site" evidence="7 10">
    <location>
        <position position="192"/>
    </location>
    <ligand>
        <name>Zn(2+)</name>
        <dbReference type="ChEBI" id="CHEBI:29105"/>
        <label>2</label>
    </ligand>
</feature>
<feature type="binding site" evidence="7 10">
    <location>
        <position position="248"/>
    </location>
    <ligand>
        <name>Zn(2+)</name>
        <dbReference type="ChEBI" id="CHEBI:29105"/>
        <label>2</label>
    </ligand>
</feature>
<feature type="binding site" evidence="7 10">
    <location>
        <position position="326"/>
    </location>
    <ligand>
        <name>Zn(2+)</name>
        <dbReference type="ChEBI" id="CHEBI:29105"/>
        <label>1</label>
    </ligand>
</feature>
<feature type="binding site" evidence="5">
    <location>
        <position position="347"/>
    </location>
    <ligand>
        <name>substrate</name>
    </ligand>
</feature>
<feature type="modified residue" description="Phosphoserine" evidence="11">
    <location>
        <position position="79"/>
    </location>
</feature>
<feature type="modified residue" description="N6-carboxylysine" evidence="1">
    <location>
        <position position="159"/>
    </location>
</feature>
<feature type="modified residue" description="N6-succinyllysine" evidence="3">
    <location>
        <position position="256"/>
    </location>
</feature>
<feature type="modified residue" description="Phosphothreonine" evidence="4">
    <location>
        <position position="510"/>
    </location>
</feature>
<feature type="sequence variant" id="VAR_002267" description="In DPYSD." evidence="6">
    <original>T</original>
    <variation>R</variation>
    <location>
        <position position="68"/>
    </location>
</feature>
<feature type="sequence variant" id="VAR_002268" description="In DPYSD; dbSNP:rs121964923." evidence="6">
    <original>Q</original>
    <variation>R</variation>
    <location>
        <position position="334"/>
    </location>
</feature>
<feature type="sequence variant" id="VAR_002269" description="In DPYSD; dbSNP:rs121964924." evidence="6">
    <original>W</original>
    <variation>R</variation>
    <location>
        <position position="360"/>
    </location>
</feature>
<feature type="sequence variant" id="VAR_002270" description="In DPYSD; dbSNP:rs267606773." evidence="6">
    <original>G</original>
    <variation>R</variation>
    <location>
        <position position="435"/>
    </location>
</feature>
<feature type="sequence variant" id="VAR_002271" description="In DPYSD." evidence="6">
    <original>R</original>
    <variation>T</variation>
    <location>
        <position position="490"/>
    </location>
</feature>
<feature type="strand" evidence="12">
    <location>
        <begin position="6"/>
        <end position="11"/>
    </location>
</feature>
<feature type="strand" evidence="12">
    <location>
        <begin position="13"/>
        <end position="15"/>
    </location>
</feature>
<feature type="strand" evidence="12">
    <location>
        <begin position="20"/>
        <end position="22"/>
    </location>
</feature>
<feature type="strand" evidence="12">
    <location>
        <begin position="24"/>
        <end position="28"/>
    </location>
</feature>
<feature type="strand" evidence="12">
    <location>
        <begin position="31"/>
        <end position="36"/>
    </location>
</feature>
<feature type="strand" evidence="12">
    <location>
        <begin position="50"/>
        <end position="53"/>
    </location>
</feature>
<feature type="strand" evidence="12">
    <location>
        <begin position="57"/>
        <end position="61"/>
    </location>
</feature>
<feature type="strand" evidence="12">
    <location>
        <begin position="63"/>
        <end position="68"/>
    </location>
</feature>
<feature type="strand" evidence="12">
    <location>
        <begin position="75"/>
        <end position="78"/>
    </location>
</feature>
<feature type="helix" evidence="12">
    <location>
        <begin position="85"/>
        <end position="91"/>
    </location>
</feature>
<feature type="turn" evidence="12">
    <location>
        <begin position="92"/>
        <end position="94"/>
    </location>
</feature>
<feature type="strand" evidence="12">
    <location>
        <begin position="95"/>
        <end position="102"/>
    </location>
</feature>
<feature type="helix" evidence="12">
    <location>
        <begin position="110"/>
        <end position="121"/>
    </location>
</feature>
<feature type="turn" evidence="12">
    <location>
        <begin position="122"/>
        <end position="124"/>
    </location>
</feature>
<feature type="strand" evidence="12">
    <location>
        <begin position="126"/>
        <end position="135"/>
    </location>
</feature>
<feature type="helix" evidence="12">
    <location>
        <begin position="140"/>
        <end position="151"/>
    </location>
</feature>
<feature type="strand" evidence="12">
    <location>
        <begin position="157"/>
        <end position="164"/>
    </location>
</feature>
<feature type="turn" evidence="12">
    <location>
        <begin position="165"/>
        <end position="168"/>
    </location>
</feature>
<feature type="helix" evidence="12">
    <location>
        <begin position="172"/>
        <end position="185"/>
    </location>
</feature>
<feature type="strand" evidence="12">
    <location>
        <begin position="188"/>
        <end position="192"/>
    </location>
</feature>
<feature type="helix" evidence="12">
    <location>
        <begin position="196"/>
        <end position="208"/>
    </location>
</feature>
<feature type="helix" evidence="12">
    <location>
        <begin position="215"/>
        <end position="219"/>
    </location>
</feature>
<feature type="helix" evidence="12">
    <location>
        <begin position="223"/>
        <end position="240"/>
    </location>
</feature>
<feature type="strand" evidence="12">
    <location>
        <begin position="244"/>
        <end position="249"/>
    </location>
</feature>
<feature type="helix" evidence="12">
    <location>
        <begin position="252"/>
        <end position="263"/>
    </location>
</feature>
<feature type="strand" evidence="12">
    <location>
        <begin position="268"/>
        <end position="273"/>
    </location>
</feature>
<feature type="helix" evidence="12">
    <location>
        <begin position="274"/>
        <end position="278"/>
    </location>
</feature>
<feature type="helix" evidence="12">
    <location>
        <begin position="282"/>
        <end position="285"/>
    </location>
</feature>
<feature type="helix" evidence="12">
    <location>
        <begin position="289"/>
        <end position="293"/>
    </location>
</feature>
<feature type="helix" evidence="12">
    <location>
        <begin position="307"/>
        <end position="316"/>
    </location>
</feature>
<feature type="helix" evidence="12">
    <location>
        <begin position="332"/>
        <end position="335"/>
    </location>
</feature>
<feature type="helix" evidence="12">
    <location>
        <begin position="336"/>
        <end position="338"/>
    </location>
</feature>
<feature type="helix" evidence="12">
    <location>
        <begin position="342"/>
        <end position="344"/>
    </location>
</feature>
<feature type="turn" evidence="12">
    <location>
        <begin position="352"/>
        <end position="354"/>
    </location>
</feature>
<feature type="helix" evidence="12">
    <location>
        <begin position="355"/>
        <end position="363"/>
    </location>
</feature>
<feature type="turn" evidence="12">
    <location>
        <begin position="364"/>
        <end position="367"/>
    </location>
</feature>
<feature type="helix" evidence="12">
    <location>
        <begin position="371"/>
        <end position="378"/>
    </location>
</feature>
<feature type="helix" evidence="12">
    <location>
        <begin position="380"/>
        <end position="385"/>
    </location>
</feature>
<feature type="turn" evidence="12">
    <location>
        <begin position="389"/>
        <end position="391"/>
    </location>
</feature>
<feature type="strand" evidence="12">
    <location>
        <begin position="403"/>
        <end position="413"/>
    </location>
</feature>
<feature type="turn" evidence="12">
    <location>
        <begin position="416"/>
        <end position="418"/>
    </location>
</feature>
<feature type="strand" evidence="12">
    <location>
        <begin position="420"/>
        <end position="422"/>
    </location>
</feature>
<feature type="turn" evidence="12">
    <location>
        <begin position="427"/>
        <end position="430"/>
    </location>
</feature>
<feature type="strand" evidence="12">
    <location>
        <begin position="432"/>
        <end position="442"/>
    </location>
</feature>
<feature type="strand" evidence="12">
    <location>
        <begin position="445"/>
        <end position="449"/>
    </location>
</feature>
<feature type="helix" evidence="12">
    <location>
        <begin position="470"/>
        <end position="482"/>
    </location>
</feature>
<evidence type="ECO:0000250" key="1"/>
<evidence type="ECO:0000250" key="2">
    <source>
        <dbReference type="UniProtKB" id="Q55DL0"/>
    </source>
</evidence>
<evidence type="ECO:0000250" key="3">
    <source>
        <dbReference type="UniProtKB" id="Q9EQF5"/>
    </source>
</evidence>
<evidence type="ECO:0000250" key="4">
    <source>
        <dbReference type="UniProtKB" id="Q9EQF6"/>
    </source>
</evidence>
<evidence type="ECO:0000250" key="5">
    <source>
        <dbReference type="UniProtKB" id="Q9P903"/>
    </source>
</evidence>
<evidence type="ECO:0000269" key="6">
    <source>
    </source>
</evidence>
<evidence type="ECO:0000269" key="7">
    <source ref="5"/>
</evidence>
<evidence type="ECO:0000305" key="8"/>
<evidence type="ECO:0000305" key="9">
    <source ref="5"/>
</evidence>
<evidence type="ECO:0007744" key="10">
    <source>
        <dbReference type="PDB" id="2VR2"/>
    </source>
</evidence>
<evidence type="ECO:0007744" key="11">
    <source>
    </source>
</evidence>
<evidence type="ECO:0007829" key="12">
    <source>
        <dbReference type="PDB" id="2VR2"/>
    </source>
</evidence>